<accession>Q7L7V1</accession>
<accession>A8MSV2</accession>
<accession>D3DRF9</accession>
<accession>Q49AG5</accession>
<accession>Q5T3L0</accession>
<accession>Q5T3L5</accession>
<accession>Q96NY1</accession>
<accession>Q9BUN0</accession>
<accession>Q9H769</accession>
<accession>Q9NSL5</accession>
<accession>Q9NV74</accession>
<accession>Q9NVJ7</accession>
<proteinExistence type="evidence at protein level"/>
<keyword id="KW-0007">Acetylation</keyword>
<keyword id="KW-0025">Alternative splicing</keyword>
<keyword id="KW-0067">ATP-binding</keyword>
<keyword id="KW-0347">Helicase</keyword>
<keyword id="KW-0378">Hydrolase</keyword>
<keyword id="KW-0496">Mitochondrion</keyword>
<keyword id="KW-0547">Nucleotide-binding</keyword>
<keyword id="KW-0539">Nucleus</keyword>
<keyword id="KW-1267">Proteomics identification</keyword>
<keyword id="KW-1185">Reference proteome</keyword>
<feature type="chain" id="PRO_0000292663" description="Putative pre-mRNA-splicing factor ATP-dependent RNA helicase DHX32">
    <location>
        <begin position="1"/>
        <end position="743"/>
    </location>
</feature>
<feature type="domain" description="Helicase ATP-binding" evidence="1">
    <location>
        <begin position="72"/>
        <end position="238"/>
    </location>
</feature>
<feature type="region of interest" description="Disordered" evidence="2">
    <location>
        <begin position="1"/>
        <end position="28"/>
    </location>
</feature>
<feature type="short sequence motif" description="DEAH box">
    <location>
        <begin position="185"/>
        <end position="188"/>
    </location>
</feature>
<feature type="binding site" evidence="1">
    <location>
        <begin position="85"/>
        <end position="92"/>
    </location>
    <ligand>
        <name>ATP</name>
        <dbReference type="ChEBI" id="CHEBI:30616"/>
    </ligand>
</feature>
<feature type="modified residue" description="N-acetylmethionine" evidence="10">
    <location>
        <position position="1"/>
    </location>
</feature>
<feature type="splice variant" id="VSP_026427" description="In isoform 2." evidence="8">
    <location>
        <begin position="284"/>
        <end position="364"/>
    </location>
</feature>
<feature type="sequence variant" id="VAR_035843" description="In a breast cancer sample; somatic mutation." evidence="7">
    <original>P</original>
    <variation>R</variation>
    <location>
        <position position="209"/>
    </location>
</feature>
<feature type="sequence variant" id="VAR_052181" description="In dbSNP:rs11244674.">
    <original>E</original>
    <variation>D</variation>
    <location>
        <position position="271"/>
    </location>
</feature>
<feature type="sequence variant" id="VAR_052182" description="In dbSNP:rs35772239.">
    <original>D</original>
    <variation>A</variation>
    <location>
        <position position="301"/>
    </location>
</feature>
<feature type="sequence variant" id="VAR_052183" description="In dbSNP:rs17153669.">
    <original>V</original>
    <variation>L</variation>
    <location>
        <position position="430"/>
    </location>
</feature>
<feature type="sequence conflict" description="In Ref. 3; BAA91754." evidence="9" ref="3">
    <original>D</original>
    <variation>G</variation>
    <location>
        <position position="26"/>
    </location>
</feature>
<feature type="sequence conflict" description="In Ref. 3; BAA91882." evidence="9" ref="3">
    <original>V</original>
    <variation>M</variation>
    <location>
        <position position="123"/>
    </location>
</feature>
<feature type="sequence conflict" description="In Ref. 3; BAA91754." evidence="9" ref="3">
    <original>M</original>
    <variation>V</variation>
    <location>
        <position position="171"/>
    </location>
</feature>
<feature type="sequence conflict" description="In Ref. 1; AAL26551." evidence="9" ref="1">
    <original>N</original>
    <variation>F</variation>
    <location>
        <position position="231"/>
    </location>
</feature>
<feature type="sequence conflict" description="In Ref. 3; BAA91882." evidence="9" ref="3">
    <original>L</original>
    <variation>S</variation>
    <location>
        <position position="459"/>
    </location>
</feature>
<feature type="sequence conflict" description="In Ref. 3; BAA91882." evidence="9" ref="3">
    <original>A</original>
    <variation>G</variation>
    <location>
        <position position="496"/>
    </location>
</feature>
<feature type="sequence conflict" description="In Ref. 6; AAH37925." evidence="9" ref="6">
    <original>E</original>
    <variation>G</variation>
    <location>
        <position position="499"/>
    </location>
</feature>
<feature type="sequence conflict" description="In Ref. 3; BAB15029." evidence="9" ref="3">
    <original>V</original>
    <variation>A</variation>
    <location>
        <position position="567"/>
    </location>
</feature>
<feature type="sequence conflict" description="In Ref. 6; AAH37925." evidence="9" ref="6">
    <original>E</original>
    <variation>G</variation>
    <location>
        <position position="590"/>
    </location>
</feature>
<feature type="sequence conflict" description="In Ref. 3; BAA91882." evidence="9" ref="3">
    <original>P</original>
    <variation>L</variation>
    <location>
        <position position="686"/>
    </location>
</feature>
<protein>
    <recommendedName>
        <fullName>Putative pre-mRNA-splicing factor ATP-dependent RNA helicase DHX32</fullName>
        <ecNumber>3.6.4.13</ecNumber>
    </recommendedName>
    <alternativeName>
        <fullName>DEAD/H box 32</fullName>
    </alternativeName>
    <alternativeName>
        <fullName>DEAD/H helicase-like protein 1</fullName>
        <shortName>DHLP1</shortName>
    </alternativeName>
    <alternativeName>
        <fullName>DEAH box protein 32</fullName>
    </alternativeName>
    <alternativeName>
        <fullName>HuDDX32</fullName>
    </alternativeName>
</protein>
<dbReference type="EC" id="3.6.4.13"/>
<dbReference type="EMBL" id="AF427340">
    <property type="protein sequence ID" value="AAL26550.1"/>
    <property type="molecule type" value="mRNA"/>
</dbReference>
<dbReference type="EMBL" id="AF427341">
    <property type="protein sequence ID" value="AAL26551.1"/>
    <property type="molecule type" value="mRNA"/>
</dbReference>
<dbReference type="EMBL" id="AY064247">
    <property type="protein sequence ID" value="AAL55437.1"/>
    <property type="molecule type" value="Genomic_DNA"/>
</dbReference>
<dbReference type="EMBL" id="AY064250">
    <property type="protein sequence ID" value="AAL55441.1"/>
    <property type="molecule type" value="mRNA"/>
</dbReference>
<dbReference type="EMBL" id="AK001556">
    <property type="protein sequence ID" value="BAA91754.1"/>
    <property type="molecule type" value="mRNA"/>
</dbReference>
<dbReference type="EMBL" id="AK001751">
    <property type="protein sequence ID" value="BAA91882.1"/>
    <property type="molecule type" value="mRNA"/>
</dbReference>
<dbReference type="EMBL" id="AK024869">
    <property type="protein sequence ID" value="BAB15029.1"/>
    <property type="status" value="ALT_INIT"/>
    <property type="molecule type" value="mRNA"/>
</dbReference>
<dbReference type="EMBL" id="AL360176">
    <property type="status" value="NOT_ANNOTATED_CDS"/>
    <property type="molecule type" value="Genomic_DNA"/>
</dbReference>
<dbReference type="EMBL" id="CH471066">
    <property type="protein sequence ID" value="EAW49216.1"/>
    <property type="molecule type" value="Genomic_DNA"/>
</dbReference>
<dbReference type="EMBL" id="CH471066">
    <property type="protein sequence ID" value="EAW49217.1"/>
    <property type="molecule type" value="Genomic_DNA"/>
</dbReference>
<dbReference type="EMBL" id="BC002473">
    <property type="protein sequence ID" value="AAH02473.3"/>
    <property type="molecule type" value="mRNA"/>
</dbReference>
<dbReference type="EMBL" id="BC037925">
    <property type="protein sequence ID" value="AAH37925.1"/>
    <property type="status" value="ALT_FRAME"/>
    <property type="molecule type" value="mRNA"/>
</dbReference>
<dbReference type="EMBL" id="BC068471">
    <property type="protein sequence ID" value="AAH68471.1"/>
    <property type="molecule type" value="mRNA"/>
</dbReference>
<dbReference type="EMBL" id="AL162051">
    <property type="protein sequence ID" value="CAB82394.1"/>
    <property type="molecule type" value="mRNA"/>
</dbReference>
<dbReference type="CCDS" id="CCDS7652.1">
    <molecule id="Q7L7V1-1"/>
</dbReference>
<dbReference type="PIR" id="T47184">
    <property type="entry name" value="T47184"/>
</dbReference>
<dbReference type="RefSeq" id="NP_060650.2">
    <molecule id="Q7L7V1-1"/>
    <property type="nucleotide sequence ID" value="NM_018180.2"/>
</dbReference>
<dbReference type="RefSeq" id="XP_016871893.1">
    <property type="nucleotide sequence ID" value="XM_017016404.1"/>
</dbReference>
<dbReference type="RefSeq" id="XP_016871894.1">
    <property type="nucleotide sequence ID" value="XM_017016405.1"/>
</dbReference>
<dbReference type="RefSeq" id="XP_047281425.1">
    <molecule id="Q7L7V1-1"/>
    <property type="nucleotide sequence ID" value="XM_047425469.1"/>
</dbReference>
<dbReference type="RefSeq" id="XP_047281426.1">
    <molecule id="Q7L7V1-1"/>
    <property type="nucleotide sequence ID" value="XM_047425470.1"/>
</dbReference>
<dbReference type="RefSeq" id="XP_054222255.1">
    <molecule id="Q7L7V1-1"/>
    <property type="nucleotide sequence ID" value="XM_054366280.1"/>
</dbReference>
<dbReference type="RefSeq" id="XP_054222256.1">
    <molecule id="Q7L7V1-1"/>
    <property type="nucleotide sequence ID" value="XM_054366281.1"/>
</dbReference>
<dbReference type="RefSeq" id="XP_054222257.1">
    <molecule id="Q7L7V1-1"/>
    <property type="nucleotide sequence ID" value="XM_054366282.1"/>
</dbReference>
<dbReference type="RefSeq" id="XP_054222258.1">
    <molecule id="Q7L7V1-1"/>
    <property type="nucleotide sequence ID" value="XM_054366283.1"/>
</dbReference>
<dbReference type="RefSeq" id="XP_054222259.1">
    <molecule id="Q7L7V1-1"/>
    <property type="nucleotide sequence ID" value="XM_054366284.1"/>
</dbReference>
<dbReference type="SMR" id="Q7L7V1"/>
<dbReference type="BioGRID" id="120878">
    <property type="interactions" value="58"/>
</dbReference>
<dbReference type="FunCoup" id="Q7L7V1">
    <property type="interactions" value="253"/>
</dbReference>
<dbReference type="IntAct" id="Q7L7V1">
    <property type="interactions" value="29"/>
</dbReference>
<dbReference type="MINT" id="Q7L7V1"/>
<dbReference type="STRING" id="9606.ENSP00000284690"/>
<dbReference type="BindingDB" id="Q7L7V1"/>
<dbReference type="ChEMBL" id="CHEMBL5465324"/>
<dbReference type="iPTMnet" id="Q7L7V1"/>
<dbReference type="PhosphoSitePlus" id="Q7L7V1"/>
<dbReference type="BioMuta" id="DHX32"/>
<dbReference type="DMDM" id="74759011"/>
<dbReference type="jPOST" id="Q7L7V1"/>
<dbReference type="MassIVE" id="Q7L7V1"/>
<dbReference type="PaxDb" id="9606-ENSP00000284690"/>
<dbReference type="PeptideAtlas" id="Q7L7V1"/>
<dbReference type="ProteomicsDB" id="68827">
    <molecule id="Q7L7V1-1"/>
</dbReference>
<dbReference type="ProteomicsDB" id="68828">
    <molecule id="Q7L7V1-2"/>
</dbReference>
<dbReference type="Pumba" id="Q7L7V1"/>
<dbReference type="Antibodypedia" id="32435">
    <property type="antibodies" value="157 antibodies from 23 providers"/>
</dbReference>
<dbReference type="DNASU" id="55760"/>
<dbReference type="Ensembl" id="ENST00000284690.4">
    <molecule id="Q7L7V1-1"/>
    <property type="protein sequence ID" value="ENSP00000284690.3"/>
    <property type="gene ID" value="ENSG00000089876.12"/>
</dbReference>
<dbReference type="GeneID" id="55760"/>
<dbReference type="KEGG" id="hsa:55760"/>
<dbReference type="MANE-Select" id="ENST00000284690.4">
    <property type="protein sequence ID" value="ENSP00000284690.3"/>
    <property type="RefSeq nucleotide sequence ID" value="NM_018180.3"/>
    <property type="RefSeq protein sequence ID" value="NP_060650.2"/>
</dbReference>
<dbReference type="UCSC" id="uc001ljf.1">
    <molecule id="Q7L7V1-1"/>
    <property type="organism name" value="human"/>
</dbReference>
<dbReference type="AGR" id="HGNC:16717"/>
<dbReference type="CTD" id="55760"/>
<dbReference type="DisGeNET" id="55760"/>
<dbReference type="GeneCards" id="DHX32"/>
<dbReference type="HGNC" id="HGNC:16717">
    <property type="gene designation" value="DHX32"/>
</dbReference>
<dbReference type="HPA" id="ENSG00000089876">
    <property type="expression patterns" value="Low tissue specificity"/>
</dbReference>
<dbReference type="MalaCards" id="DHX32"/>
<dbReference type="MIM" id="607960">
    <property type="type" value="gene"/>
</dbReference>
<dbReference type="neXtProt" id="NX_Q7L7V1"/>
<dbReference type="OpenTargets" id="ENSG00000089876"/>
<dbReference type="PharmGKB" id="PA27219"/>
<dbReference type="VEuPathDB" id="HostDB:ENSG00000089876"/>
<dbReference type="eggNOG" id="KOG0925">
    <property type="taxonomic scope" value="Eukaryota"/>
</dbReference>
<dbReference type="GeneTree" id="ENSGT00940000157227"/>
<dbReference type="HOGENOM" id="CLU_001832_5_11_1"/>
<dbReference type="InParanoid" id="Q7L7V1"/>
<dbReference type="OMA" id="CTQVHKP"/>
<dbReference type="OrthoDB" id="10253254at2759"/>
<dbReference type="PAN-GO" id="Q7L7V1">
    <property type="GO annotations" value="3 GO annotations based on evolutionary models"/>
</dbReference>
<dbReference type="PhylomeDB" id="Q7L7V1"/>
<dbReference type="TreeFam" id="TF105735"/>
<dbReference type="PathwayCommons" id="Q7L7V1"/>
<dbReference type="SignaLink" id="Q7L7V1"/>
<dbReference type="BioGRID-ORCS" id="55760">
    <property type="hits" value="6 hits in 1162 CRISPR screens"/>
</dbReference>
<dbReference type="ChiTaRS" id="DHX32">
    <property type="organism name" value="human"/>
</dbReference>
<dbReference type="GeneWiki" id="DHX32"/>
<dbReference type="GenomeRNAi" id="55760"/>
<dbReference type="Pharos" id="Q7L7V1">
    <property type="development level" value="Tbio"/>
</dbReference>
<dbReference type="PRO" id="PR:Q7L7V1"/>
<dbReference type="Proteomes" id="UP000005640">
    <property type="component" value="Chromosome 10"/>
</dbReference>
<dbReference type="RNAct" id="Q7L7V1">
    <property type="molecule type" value="protein"/>
</dbReference>
<dbReference type="Bgee" id="ENSG00000089876">
    <property type="expression patterns" value="Expressed in nasal cavity epithelium and 210 other cell types or tissues"/>
</dbReference>
<dbReference type="ExpressionAtlas" id="Q7L7V1">
    <property type="expression patterns" value="baseline and differential"/>
</dbReference>
<dbReference type="GO" id="GO:0005739">
    <property type="term" value="C:mitochondrion"/>
    <property type="evidence" value="ECO:0006056"/>
    <property type="project" value="FlyBase"/>
</dbReference>
<dbReference type="GO" id="GO:0005681">
    <property type="term" value="C:spliceosomal complex"/>
    <property type="evidence" value="ECO:0000318"/>
    <property type="project" value="GO_Central"/>
</dbReference>
<dbReference type="GO" id="GO:0005524">
    <property type="term" value="F:ATP binding"/>
    <property type="evidence" value="ECO:0007669"/>
    <property type="project" value="UniProtKB-KW"/>
</dbReference>
<dbReference type="GO" id="GO:0016887">
    <property type="term" value="F:ATP hydrolysis activity"/>
    <property type="evidence" value="ECO:0007669"/>
    <property type="project" value="RHEA"/>
</dbReference>
<dbReference type="GO" id="GO:0004386">
    <property type="term" value="F:helicase activity"/>
    <property type="evidence" value="ECO:0000318"/>
    <property type="project" value="GO_Central"/>
</dbReference>
<dbReference type="GO" id="GO:0003723">
    <property type="term" value="F:RNA binding"/>
    <property type="evidence" value="ECO:0000318"/>
    <property type="project" value="GO_Central"/>
</dbReference>
<dbReference type="GO" id="GO:0003724">
    <property type="term" value="F:RNA helicase activity"/>
    <property type="evidence" value="ECO:0007669"/>
    <property type="project" value="UniProtKB-EC"/>
</dbReference>
<dbReference type="CDD" id="cd17977">
    <property type="entry name" value="DEXHc_DHX32"/>
    <property type="match status" value="1"/>
</dbReference>
<dbReference type="CDD" id="cd18791">
    <property type="entry name" value="SF2_C_RHA"/>
    <property type="match status" value="1"/>
</dbReference>
<dbReference type="FunFam" id="1.20.120.1080:FF:000010">
    <property type="entry name" value="ATP-dependent RNA helicase DQX1 isoform X1"/>
    <property type="match status" value="1"/>
</dbReference>
<dbReference type="FunFam" id="3.40.50.300:FF:001007">
    <property type="entry name" value="putative pre-mRNA-splicing factor ATP-dependent RNA helicase DHX32"/>
    <property type="match status" value="1"/>
</dbReference>
<dbReference type="FunFam" id="3.40.50.300:FF:001055">
    <property type="entry name" value="putative pre-mRNA-splicing factor ATP-dependent RNA helicase DHX32"/>
    <property type="match status" value="1"/>
</dbReference>
<dbReference type="Gene3D" id="1.20.120.1080">
    <property type="match status" value="1"/>
</dbReference>
<dbReference type="Gene3D" id="3.40.50.300">
    <property type="entry name" value="P-loop containing nucleotide triphosphate hydrolases"/>
    <property type="match status" value="2"/>
</dbReference>
<dbReference type="InterPro" id="IPR011709">
    <property type="entry name" value="DEAD-box_helicase_OB_fold"/>
</dbReference>
<dbReference type="InterPro" id="IPR048333">
    <property type="entry name" value="HA2_WH"/>
</dbReference>
<dbReference type="InterPro" id="IPR007502">
    <property type="entry name" value="Helicase-assoc_dom"/>
</dbReference>
<dbReference type="InterPro" id="IPR014001">
    <property type="entry name" value="Helicase_ATP-bd"/>
</dbReference>
<dbReference type="InterPro" id="IPR027417">
    <property type="entry name" value="P-loop_NTPase"/>
</dbReference>
<dbReference type="PANTHER" id="PTHR18934">
    <property type="entry name" value="ATP-DEPENDENT RNA HELICASE"/>
    <property type="match status" value="1"/>
</dbReference>
<dbReference type="PANTHER" id="PTHR18934:SF88">
    <property type="entry name" value="PRE-MRNA-SPLICING FACTOR ATP-DEPENDENT RNA HELICASE DHX32-RELATED"/>
    <property type="match status" value="1"/>
</dbReference>
<dbReference type="Pfam" id="PF21010">
    <property type="entry name" value="HA2_C"/>
    <property type="match status" value="1"/>
</dbReference>
<dbReference type="Pfam" id="PF04408">
    <property type="entry name" value="HA2_N"/>
    <property type="match status" value="1"/>
</dbReference>
<dbReference type="Pfam" id="PF07717">
    <property type="entry name" value="OB_NTP_bind"/>
    <property type="match status" value="1"/>
</dbReference>
<dbReference type="SMART" id="SM00847">
    <property type="entry name" value="HA2"/>
    <property type="match status" value="1"/>
</dbReference>
<dbReference type="SUPFAM" id="SSF52540">
    <property type="entry name" value="P-loop containing nucleoside triphosphate hydrolases"/>
    <property type="match status" value="1"/>
</dbReference>
<dbReference type="PROSITE" id="PS51192">
    <property type="entry name" value="HELICASE_ATP_BIND_1"/>
    <property type="match status" value="1"/>
</dbReference>
<gene>
    <name type="primary">DHX32</name>
    <name type="synonym">DDX32</name>
</gene>
<comment type="catalytic activity">
    <reaction>
        <text>ATP + H2O = ADP + phosphate + H(+)</text>
        <dbReference type="Rhea" id="RHEA:13065"/>
        <dbReference type="ChEBI" id="CHEBI:15377"/>
        <dbReference type="ChEBI" id="CHEBI:15378"/>
        <dbReference type="ChEBI" id="CHEBI:30616"/>
        <dbReference type="ChEBI" id="CHEBI:43474"/>
        <dbReference type="ChEBI" id="CHEBI:456216"/>
        <dbReference type="EC" id="3.6.4.13"/>
    </reaction>
</comment>
<comment type="interaction">
    <interactant intactId="EBI-2807297">
        <id>Q7L7V1</id>
    </interactant>
    <interactant intactId="EBI-719941">
        <id>Q3B820</id>
        <label>FAM161A</label>
    </interactant>
    <organismsDiffer>false</organismsDiffer>
    <experiments>9</experiments>
</comment>
<comment type="subcellular location">
    <subcellularLocation>
        <location evidence="6">Nucleus</location>
    </subcellularLocation>
    <subcellularLocation>
        <location evidence="6">Mitochondrion</location>
    </subcellularLocation>
</comment>
<comment type="alternative products">
    <event type="alternative splicing"/>
    <isoform>
        <id>Q7L7V1-1</id>
        <name>1</name>
        <sequence type="displayed"/>
    </isoform>
    <isoform>
        <id>Q7L7V1-2</id>
        <name>2</name>
        <sequence type="described" ref="VSP_026427"/>
    </isoform>
</comment>
<comment type="tissue specificity">
    <text evidence="3 4">Expressed in lymphoid tissues (at protein level). Expressed in brain, heart, skeletal muscle, colon, thymus, spleen, kidney, liver, small intestine, placenta, lung, lymphoid tissues and blood leukocytes.</text>
</comment>
<comment type="induction">
    <text evidence="3 5">Up-regulated by ionomycin in T-lymphocytes. Down-regulated in acute lymphoblastic leukemia.</text>
</comment>
<comment type="similarity">
    <text evidence="9">Belongs to the DEAD box helicase family. DEAH subfamily.</text>
</comment>
<comment type="sequence caution" evidence="9">
    <conflict type="frameshift">
        <sequence resource="EMBL-CDS" id="AAH37925"/>
    </conflict>
</comment>
<comment type="sequence caution" evidence="9">
    <conflict type="erroneous initiation">
        <sequence resource="EMBL-CDS" id="BAB15029"/>
    </conflict>
</comment>
<name>DHX32_HUMAN</name>
<evidence type="ECO:0000255" key="1">
    <source>
        <dbReference type="PROSITE-ProRule" id="PRU00541"/>
    </source>
</evidence>
<evidence type="ECO:0000256" key="2">
    <source>
        <dbReference type="SAM" id="MobiDB-lite"/>
    </source>
</evidence>
<evidence type="ECO:0000269" key="3">
    <source>
    </source>
</evidence>
<evidence type="ECO:0000269" key="4">
    <source>
    </source>
</evidence>
<evidence type="ECO:0000269" key="5">
    <source>
    </source>
</evidence>
<evidence type="ECO:0000269" key="6">
    <source>
    </source>
</evidence>
<evidence type="ECO:0000269" key="7">
    <source>
    </source>
</evidence>
<evidence type="ECO:0000303" key="8">
    <source>
    </source>
</evidence>
<evidence type="ECO:0000305" key="9"/>
<evidence type="ECO:0007744" key="10">
    <source>
    </source>
</evidence>
<reference key="1">
    <citation type="journal article" date="2002" name="Leuk. Res.">
        <title>The novel helicase homologue DDX32 is down-regulated in acute lymphoblastic leukemia.</title>
        <authorList>
            <person name="Abdelhaleem M."/>
        </authorList>
    </citation>
    <scope>NUCLEOTIDE SEQUENCE [MRNA] (ISOFORM 1)</scope>
    <scope>NUCLEOTIDE SEQUENCE [MRNA] OF 230-414 (ISOFORM 2)</scope>
    <scope>INDUCTION</scope>
    <scope>TISSUE SPECIFICITY</scope>
    <source>
        <tissue>Myeloid leukemia cell</tissue>
    </source>
</reference>
<reference key="2">
    <citation type="journal article" date="2003" name="Gene">
        <title>Genomic structure of the human BCCIP gene and its expression in cancer.</title>
        <authorList>
            <person name="Meng X."/>
            <person name="Liu J."/>
            <person name="Shen Z."/>
        </authorList>
    </citation>
    <scope>NUCLEOTIDE SEQUENCE [GENOMIC DNA] (ISOFORM 1)</scope>
</reference>
<reference key="3">
    <citation type="journal article" date="2004" name="Nat. Genet.">
        <title>Complete sequencing and characterization of 21,243 full-length human cDNAs.</title>
        <authorList>
            <person name="Ota T."/>
            <person name="Suzuki Y."/>
            <person name="Nishikawa T."/>
            <person name="Otsuki T."/>
            <person name="Sugiyama T."/>
            <person name="Irie R."/>
            <person name="Wakamatsu A."/>
            <person name="Hayashi K."/>
            <person name="Sato H."/>
            <person name="Nagai K."/>
            <person name="Kimura K."/>
            <person name="Makita H."/>
            <person name="Sekine M."/>
            <person name="Obayashi M."/>
            <person name="Nishi T."/>
            <person name="Shibahara T."/>
            <person name="Tanaka T."/>
            <person name="Ishii S."/>
            <person name="Yamamoto J."/>
            <person name="Saito K."/>
            <person name="Kawai Y."/>
            <person name="Isono Y."/>
            <person name="Nakamura Y."/>
            <person name="Nagahari K."/>
            <person name="Murakami K."/>
            <person name="Yasuda T."/>
            <person name="Iwayanagi T."/>
            <person name="Wagatsuma M."/>
            <person name="Shiratori A."/>
            <person name="Sudo H."/>
            <person name="Hosoiri T."/>
            <person name="Kaku Y."/>
            <person name="Kodaira H."/>
            <person name="Kondo H."/>
            <person name="Sugawara M."/>
            <person name="Takahashi M."/>
            <person name="Kanda K."/>
            <person name="Yokoi T."/>
            <person name="Furuya T."/>
            <person name="Kikkawa E."/>
            <person name="Omura Y."/>
            <person name="Abe K."/>
            <person name="Kamihara K."/>
            <person name="Katsuta N."/>
            <person name="Sato K."/>
            <person name="Tanikawa M."/>
            <person name="Yamazaki M."/>
            <person name="Ninomiya K."/>
            <person name="Ishibashi T."/>
            <person name="Yamashita H."/>
            <person name="Murakawa K."/>
            <person name="Fujimori K."/>
            <person name="Tanai H."/>
            <person name="Kimata M."/>
            <person name="Watanabe M."/>
            <person name="Hiraoka S."/>
            <person name="Chiba Y."/>
            <person name="Ishida S."/>
            <person name="Ono Y."/>
            <person name="Takiguchi S."/>
            <person name="Watanabe S."/>
            <person name="Yosida M."/>
            <person name="Hotuta T."/>
            <person name="Kusano J."/>
            <person name="Kanehori K."/>
            <person name="Takahashi-Fujii A."/>
            <person name="Hara H."/>
            <person name="Tanase T.-O."/>
            <person name="Nomura Y."/>
            <person name="Togiya S."/>
            <person name="Komai F."/>
            <person name="Hara R."/>
            <person name="Takeuchi K."/>
            <person name="Arita M."/>
            <person name="Imose N."/>
            <person name="Musashino K."/>
            <person name="Yuuki H."/>
            <person name="Oshima A."/>
            <person name="Sasaki N."/>
            <person name="Aotsuka S."/>
            <person name="Yoshikawa Y."/>
            <person name="Matsunawa H."/>
            <person name="Ichihara T."/>
            <person name="Shiohata N."/>
            <person name="Sano S."/>
            <person name="Moriya S."/>
            <person name="Momiyama H."/>
            <person name="Satoh N."/>
            <person name="Takami S."/>
            <person name="Terashima Y."/>
            <person name="Suzuki O."/>
            <person name="Nakagawa S."/>
            <person name="Senoh A."/>
            <person name="Mizoguchi H."/>
            <person name="Goto Y."/>
            <person name="Shimizu F."/>
            <person name="Wakebe H."/>
            <person name="Hishigaki H."/>
            <person name="Watanabe T."/>
            <person name="Sugiyama A."/>
            <person name="Takemoto M."/>
            <person name="Kawakami B."/>
            <person name="Yamazaki M."/>
            <person name="Watanabe K."/>
            <person name="Kumagai A."/>
            <person name="Itakura S."/>
            <person name="Fukuzumi Y."/>
            <person name="Fujimori Y."/>
            <person name="Komiyama M."/>
            <person name="Tashiro H."/>
            <person name="Tanigami A."/>
            <person name="Fujiwara T."/>
            <person name="Ono T."/>
            <person name="Yamada K."/>
            <person name="Fujii Y."/>
            <person name="Ozaki K."/>
            <person name="Hirao M."/>
            <person name="Ohmori Y."/>
            <person name="Kawabata A."/>
            <person name="Hikiji T."/>
            <person name="Kobatake N."/>
            <person name="Inagaki H."/>
            <person name="Ikema Y."/>
            <person name="Okamoto S."/>
            <person name="Okitani R."/>
            <person name="Kawakami T."/>
            <person name="Noguchi S."/>
            <person name="Itoh T."/>
            <person name="Shigeta K."/>
            <person name="Senba T."/>
            <person name="Matsumura K."/>
            <person name="Nakajima Y."/>
            <person name="Mizuno T."/>
            <person name="Morinaga M."/>
            <person name="Sasaki M."/>
            <person name="Togashi T."/>
            <person name="Oyama M."/>
            <person name="Hata H."/>
            <person name="Watanabe M."/>
            <person name="Komatsu T."/>
            <person name="Mizushima-Sugano J."/>
            <person name="Satoh T."/>
            <person name="Shirai Y."/>
            <person name="Takahashi Y."/>
            <person name="Nakagawa K."/>
            <person name="Okumura K."/>
            <person name="Nagase T."/>
            <person name="Nomura N."/>
            <person name="Kikuchi H."/>
            <person name="Masuho Y."/>
            <person name="Yamashita R."/>
            <person name="Nakai K."/>
            <person name="Yada T."/>
            <person name="Nakamura Y."/>
            <person name="Ohara O."/>
            <person name="Isogai T."/>
            <person name="Sugano S."/>
        </authorList>
    </citation>
    <scope>NUCLEOTIDE SEQUENCE [LARGE SCALE MRNA] (ISOFORM 1)</scope>
    <source>
        <tissue>Colon</tissue>
        <tissue>Teratocarcinoma</tissue>
    </source>
</reference>
<reference key="4">
    <citation type="journal article" date="2004" name="Nature">
        <title>The DNA sequence and comparative analysis of human chromosome 10.</title>
        <authorList>
            <person name="Deloukas P."/>
            <person name="Earthrowl M.E."/>
            <person name="Grafham D.V."/>
            <person name="Rubenfield M."/>
            <person name="French L."/>
            <person name="Steward C.A."/>
            <person name="Sims S.K."/>
            <person name="Jones M.C."/>
            <person name="Searle S."/>
            <person name="Scott C."/>
            <person name="Howe K."/>
            <person name="Hunt S.E."/>
            <person name="Andrews T.D."/>
            <person name="Gilbert J.G.R."/>
            <person name="Swarbreck D."/>
            <person name="Ashurst J.L."/>
            <person name="Taylor A."/>
            <person name="Battles J."/>
            <person name="Bird C.P."/>
            <person name="Ainscough R."/>
            <person name="Almeida J.P."/>
            <person name="Ashwell R.I.S."/>
            <person name="Ambrose K.D."/>
            <person name="Babbage A.K."/>
            <person name="Bagguley C.L."/>
            <person name="Bailey J."/>
            <person name="Banerjee R."/>
            <person name="Bates K."/>
            <person name="Beasley H."/>
            <person name="Bray-Allen S."/>
            <person name="Brown A.J."/>
            <person name="Brown J.Y."/>
            <person name="Burford D.C."/>
            <person name="Burrill W."/>
            <person name="Burton J."/>
            <person name="Cahill P."/>
            <person name="Camire D."/>
            <person name="Carter N.P."/>
            <person name="Chapman J.C."/>
            <person name="Clark S.Y."/>
            <person name="Clarke G."/>
            <person name="Clee C.M."/>
            <person name="Clegg S."/>
            <person name="Corby N."/>
            <person name="Coulson A."/>
            <person name="Dhami P."/>
            <person name="Dutta I."/>
            <person name="Dunn M."/>
            <person name="Faulkner L."/>
            <person name="Frankish A."/>
            <person name="Frankland J.A."/>
            <person name="Garner P."/>
            <person name="Garnett J."/>
            <person name="Gribble S."/>
            <person name="Griffiths C."/>
            <person name="Grocock R."/>
            <person name="Gustafson E."/>
            <person name="Hammond S."/>
            <person name="Harley J.L."/>
            <person name="Hart E."/>
            <person name="Heath P.D."/>
            <person name="Ho T.P."/>
            <person name="Hopkins B."/>
            <person name="Horne J."/>
            <person name="Howden P.J."/>
            <person name="Huckle E."/>
            <person name="Hynds C."/>
            <person name="Johnson C."/>
            <person name="Johnson D."/>
            <person name="Kana A."/>
            <person name="Kay M."/>
            <person name="Kimberley A.M."/>
            <person name="Kershaw J.K."/>
            <person name="Kokkinaki M."/>
            <person name="Laird G.K."/>
            <person name="Lawlor S."/>
            <person name="Lee H.M."/>
            <person name="Leongamornlert D.A."/>
            <person name="Laird G."/>
            <person name="Lloyd C."/>
            <person name="Lloyd D.M."/>
            <person name="Loveland J."/>
            <person name="Lovell J."/>
            <person name="McLaren S."/>
            <person name="McLay K.E."/>
            <person name="McMurray A."/>
            <person name="Mashreghi-Mohammadi M."/>
            <person name="Matthews L."/>
            <person name="Milne S."/>
            <person name="Nickerson T."/>
            <person name="Nguyen M."/>
            <person name="Overton-Larty E."/>
            <person name="Palmer S.A."/>
            <person name="Pearce A.V."/>
            <person name="Peck A.I."/>
            <person name="Pelan S."/>
            <person name="Phillimore B."/>
            <person name="Porter K."/>
            <person name="Rice C.M."/>
            <person name="Rogosin A."/>
            <person name="Ross M.T."/>
            <person name="Sarafidou T."/>
            <person name="Sehra H.K."/>
            <person name="Shownkeen R."/>
            <person name="Skuce C.D."/>
            <person name="Smith M."/>
            <person name="Standring L."/>
            <person name="Sycamore N."/>
            <person name="Tester J."/>
            <person name="Thorpe A."/>
            <person name="Torcasso W."/>
            <person name="Tracey A."/>
            <person name="Tromans A."/>
            <person name="Tsolas J."/>
            <person name="Wall M."/>
            <person name="Walsh J."/>
            <person name="Wang H."/>
            <person name="Weinstock K."/>
            <person name="West A.P."/>
            <person name="Willey D.L."/>
            <person name="Whitehead S.L."/>
            <person name="Wilming L."/>
            <person name="Wray P.W."/>
            <person name="Young L."/>
            <person name="Chen Y."/>
            <person name="Lovering R.C."/>
            <person name="Moschonas N.K."/>
            <person name="Siebert R."/>
            <person name="Fechtel K."/>
            <person name="Bentley D."/>
            <person name="Durbin R.M."/>
            <person name="Hubbard T."/>
            <person name="Doucette-Stamm L."/>
            <person name="Beck S."/>
            <person name="Smith D.R."/>
            <person name="Rogers J."/>
        </authorList>
    </citation>
    <scope>NUCLEOTIDE SEQUENCE [LARGE SCALE GENOMIC DNA]</scope>
</reference>
<reference key="5">
    <citation type="submission" date="2005-09" db="EMBL/GenBank/DDBJ databases">
        <authorList>
            <person name="Mural R.J."/>
            <person name="Istrail S."/>
            <person name="Sutton G.G."/>
            <person name="Florea L."/>
            <person name="Halpern A.L."/>
            <person name="Mobarry C.M."/>
            <person name="Lippert R."/>
            <person name="Walenz B."/>
            <person name="Shatkay H."/>
            <person name="Dew I."/>
            <person name="Miller J.R."/>
            <person name="Flanigan M.J."/>
            <person name="Edwards N.J."/>
            <person name="Bolanos R."/>
            <person name="Fasulo D."/>
            <person name="Halldorsson B.V."/>
            <person name="Hannenhalli S."/>
            <person name="Turner R."/>
            <person name="Yooseph S."/>
            <person name="Lu F."/>
            <person name="Nusskern D.R."/>
            <person name="Shue B.C."/>
            <person name="Zheng X.H."/>
            <person name="Zhong F."/>
            <person name="Delcher A.L."/>
            <person name="Huson D.H."/>
            <person name="Kravitz S.A."/>
            <person name="Mouchard L."/>
            <person name="Reinert K."/>
            <person name="Remington K.A."/>
            <person name="Clark A.G."/>
            <person name="Waterman M.S."/>
            <person name="Eichler E.E."/>
            <person name="Adams M.D."/>
            <person name="Hunkapiller M.W."/>
            <person name="Myers E.W."/>
            <person name="Venter J.C."/>
        </authorList>
    </citation>
    <scope>NUCLEOTIDE SEQUENCE [LARGE SCALE GENOMIC DNA]</scope>
</reference>
<reference key="6">
    <citation type="journal article" date="2004" name="Genome Res.">
        <title>The status, quality, and expansion of the NIH full-length cDNA project: the Mammalian Gene Collection (MGC).</title>
        <authorList>
            <consortium name="The MGC Project Team"/>
        </authorList>
    </citation>
    <scope>NUCLEOTIDE SEQUENCE [LARGE SCALE MRNA] (ISOFORM 1)</scope>
    <source>
        <tissue>Brain</tissue>
        <tissue>Kidney</tissue>
        <tissue>Placenta</tissue>
    </source>
</reference>
<reference key="7">
    <citation type="journal article" date="2007" name="BMC Genomics">
        <title>The full-ORF clone resource of the German cDNA consortium.</title>
        <authorList>
            <person name="Bechtel S."/>
            <person name="Rosenfelder H."/>
            <person name="Duda A."/>
            <person name="Schmidt C.P."/>
            <person name="Ernst U."/>
            <person name="Wellenreuther R."/>
            <person name="Mehrle A."/>
            <person name="Schuster C."/>
            <person name="Bahr A."/>
            <person name="Bloecker H."/>
            <person name="Heubner D."/>
            <person name="Hoerlein A."/>
            <person name="Michel G."/>
            <person name="Wedler H."/>
            <person name="Koehrer K."/>
            <person name="Ottenwaelder B."/>
            <person name="Poustka A."/>
            <person name="Wiemann S."/>
            <person name="Schupp I."/>
        </authorList>
    </citation>
    <scope>NUCLEOTIDE SEQUENCE [LARGE SCALE MRNA] OF 238-743 (ISOFORM 1)</scope>
    <source>
        <tissue>Testis</tissue>
    </source>
</reference>
<reference key="8">
    <citation type="journal article" date="2005" name="Cell. Immunol.">
        <title>The activation-induced expression of DHX32 in Jurkat T cells is specific and involves calcium and nuclear factor of activated T cells.</title>
        <authorList>
            <person name="Alli Z."/>
            <person name="Nam E.H."/>
            <person name="Beimnet K."/>
            <person name="Abdelhaleem M."/>
        </authorList>
    </citation>
    <scope>INDUCTION</scope>
</reference>
<reference key="9">
    <citation type="journal article" date="2005" name="Exp. Mol. Pathol.">
        <title>Expression of DHX32 in lymphoid tissues.</title>
        <authorList>
            <person name="Alli Z."/>
            <person name="Ho M."/>
            <person name="Abdelhaleem M."/>
        </authorList>
    </citation>
    <scope>TISSUE SPECIFICITY</scope>
</reference>
<reference key="10">
    <citation type="journal article" date="2006" name="Exp. Mol. Pathol.">
        <title>Nuclear and mitochondrial localization of the putative RNA helicase DHX32.</title>
        <authorList>
            <person name="Alli Z."/>
            <person name="Ackerley C."/>
            <person name="Chen Y."/>
            <person name="Al-Saud B."/>
            <person name="Abdelhaleem M."/>
        </authorList>
    </citation>
    <scope>SUBCELLULAR LOCATION</scope>
</reference>
<reference key="11">
    <citation type="journal article" date="2012" name="Proc. Natl. Acad. Sci. U.S.A.">
        <title>N-terminal acetylome analyses and functional insights of the N-terminal acetyltransferase NatB.</title>
        <authorList>
            <person name="Van Damme P."/>
            <person name="Lasa M."/>
            <person name="Polevoda B."/>
            <person name="Gazquez C."/>
            <person name="Elosegui-Artola A."/>
            <person name="Kim D.S."/>
            <person name="De Juan-Pardo E."/>
            <person name="Demeyer K."/>
            <person name="Hole K."/>
            <person name="Larrea E."/>
            <person name="Timmerman E."/>
            <person name="Prieto J."/>
            <person name="Arnesen T."/>
            <person name="Sherman F."/>
            <person name="Gevaert K."/>
            <person name="Aldabe R."/>
        </authorList>
    </citation>
    <scope>ACETYLATION [LARGE SCALE ANALYSIS] AT MET-1</scope>
    <scope>IDENTIFICATION BY MASS SPECTROMETRY [LARGE SCALE ANALYSIS]</scope>
</reference>
<reference key="12">
    <citation type="journal article" date="2006" name="Science">
        <title>The consensus coding sequences of human breast and colorectal cancers.</title>
        <authorList>
            <person name="Sjoeblom T."/>
            <person name="Jones S."/>
            <person name="Wood L.D."/>
            <person name="Parsons D.W."/>
            <person name="Lin J."/>
            <person name="Barber T.D."/>
            <person name="Mandelker D."/>
            <person name="Leary R.J."/>
            <person name="Ptak J."/>
            <person name="Silliman N."/>
            <person name="Szabo S."/>
            <person name="Buckhaults P."/>
            <person name="Farrell C."/>
            <person name="Meeh P."/>
            <person name="Markowitz S.D."/>
            <person name="Willis J."/>
            <person name="Dawson D."/>
            <person name="Willson J.K.V."/>
            <person name="Gazdar A.F."/>
            <person name="Hartigan J."/>
            <person name="Wu L."/>
            <person name="Liu C."/>
            <person name="Parmigiani G."/>
            <person name="Park B.H."/>
            <person name="Bachman K.E."/>
            <person name="Papadopoulos N."/>
            <person name="Vogelstein B."/>
            <person name="Kinzler K.W."/>
            <person name="Velculescu V.E."/>
        </authorList>
    </citation>
    <scope>VARIANT [LARGE SCALE ANALYSIS] ARG-209</scope>
</reference>
<sequence length="743" mass="84419">MEEEGLECPNSSSEKRYFPESLDSSDGDEEEVLACEDLELNPFDGLPYSSRYYKLLKEREDLPIWKEKYSFMENLLQNQIVIVSGDAKCGKSAQVPQWCAEYCLSIHYQHGGVICTQVHKQTVVQLALRVADEMDVNIGHEVGYVIPFENCCTNETILRYCTDDMLQREMMSNPFLGSYGVIILDDIHERSIATDVLLGLLKDVLLARPELKLIINSSPHLISKLNSYYGNVPVIEVKNKHPVEVVYLSEAQKDSFESILRLIFEIHHSGEKGDIVVFLACEQDIEKVCETVYQGSNLNPDLGELVVVPLYPKEKCSLFKPLDETEKRCQVYQRRVVLTTSSGEFLIWSNSVRFVIDVGVERRKVYNPRIRANSLVMQPISQSQAEIRKQILGSSSSGKFFCLYTEEFASKDMTPLKPAEMQEANLTSMVLFMKRIDIAGLGHCDFMNRPAPESLMQALEDLDYLAALDNDGNLSEFGIIMSEFPLDPQLSKSILASCEFDCVDEVLTIAAMVTAPNCFSHVPHGAEEAALTCWKTFLHPEGDHFTLISIYKAYQDTTLNSSSEYCVEKWCRDYFLNCSALRMADVIRAELLEIIKRIELPYAEPAFGSKENTLNIKKALLSGYFMQIARDVDGSGNYLMLTHKQVAQLHPLSGYSITKKMPEWVLFHKFSISENNYIRITSEISPELFMQLVPQYYFSNLPPSESKDILQQVVDHLSPVSTMNKEQQMCETCPETEQRCTLQ</sequence>
<organism>
    <name type="scientific">Homo sapiens</name>
    <name type="common">Human</name>
    <dbReference type="NCBI Taxonomy" id="9606"/>
    <lineage>
        <taxon>Eukaryota</taxon>
        <taxon>Metazoa</taxon>
        <taxon>Chordata</taxon>
        <taxon>Craniata</taxon>
        <taxon>Vertebrata</taxon>
        <taxon>Euteleostomi</taxon>
        <taxon>Mammalia</taxon>
        <taxon>Eutheria</taxon>
        <taxon>Euarchontoglires</taxon>
        <taxon>Primates</taxon>
        <taxon>Haplorrhini</taxon>
        <taxon>Catarrhini</taxon>
        <taxon>Hominidae</taxon>
        <taxon>Homo</taxon>
    </lineage>
</organism>